<dbReference type="EC" id="3.2.2.3" evidence="2"/>
<dbReference type="EC" id="3.2.2.7" evidence="2"/>
<dbReference type="EC" id="3.2.2.2" evidence="2"/>
<dbReference type="EC" id="3.2.2.-" evidence="3 5"/>
<dbReference type="EMBL" id="AC006921">
    <property type="protein sequence ID" value="AAD21435.2"/>
    <property type="molecule type" value="Genomic_DNA"/>
</dbReference>
<dbReference type="EMBL" id="CP002685">
    <property type="protein sequence ID" value="AEC09231.1"/>
    <property type="molecule type" value="Genomic_DNA"/>
</dbReference>
<dbReference type="EMBL" id="AY054182">
    <property type="protein sequence ID" value="AAL06843.1"/>
    <property type="molecule type" value="mRNA"/>
</dbReference>
<dbReference type="EMBL" id="AY066040">
    <property type="protein sequence ID" value="AAL47407.1"/>
    <property type="molecule type" value="mRNA"/>
</dbReference>
<dbReference type="EMBL" id="AY086551">
    <property type="protein sequence ID" value="AAM63615.1"/>
    <property type="molecule type" value="mRNA"/>
</dbReference>
<dbReference type="PIR" id="B84779">
    <property type="entry name" value="B84779"/>
</dbReference>
<dbReference type="RefSeq" id="NP_565843.1">
    <property type="nucleotide sequence ID" value="NM_129188.4"/>
</dbReference>
<dbReference type="SMR" id="Q9SJM7"/>
<dbReference type="BioGRID" id="3548">
    <property type="interactions" value="1"/>
</dbReference>
<dbReference type="FunCoup" id="Q9SJM7">
    <property type="interactions" value="888"/>
</dbReference>
<dbReference type="STRING" id="3702.Q9SJM7"/>
<dbReference type="iPTMnet" id="Q9SJM7"/>
<dbReference type="PaxDb" id="3702-AT2G36310.1"/>
<dbReference type="ProteomicsDB" id="228698"/>
<dbReference type="EnsemblPlants" id="AT2G36310.1">
    <property type="protein sequence ID" value="AT2G36310.1"/>
    <property type="gene ID" value="AT2G36310"/>
</dbReference>
<dbReference type="GeneID" id="818204"/>
<dbReference type="Gramene" id="AT2G36310.1">
    <property type="protein sequence ID" value="AT2G36310.1"/>
    <property type="gene ID" value="AT2G36310"/>
</dbReference>
<dbReference type="KEGG" id="ath:AT2G36310"/>
<dbReference type="Araport" id="AT2G36310"/>
<dbReference type="TAIR" id="AT2G36310">
    <property type="gene designation" value="URH1"/>
</dbReference>
<dbReference type="eggNOG" id="KOG2938">
    <property type="taxonomic scope" value="Eukaryota"/>
</dbReference>
<dbReference type="HOGENOM" id="CLU_036838_2_1_1"/>
<dbReference type="InParanoid" id="Q9SJM7"/>
<dbReference type="OMA" id="LMAFWDR"/>
<dbReference type="OrthoDB" id="432381at2759"/>
<dbReference type="PhylomeDB" id="Q9SJM7"/>
<dbReference type="BioCyc" id="ARA:AT2G36310-MONOMER"/>
<dbReference type="BioCyc" id="MetaCyc:AT2G36310-MONOMER"/>
<dbReference type="BRENDA" id="3.2.2.3">
    <property type="organism ID" value="399"/>
</dbReference>
<dbReference type="BRENDA" id="3.2.2.8">
    <property type="organism ID" value="399"/>
</dbReference>
<dbReference type="PRO" id="PR:Q9SJM7"/>
<dbReference type="Proteomes" id="UP000006548">
    <property type="component" value="Chromosome 2"/>
</dbReference>
<dbReference type="ExpressionAtlas" id="Q9SJM7">
    <property type="expression patterns" value="baseline and differential"/>
</dbReference>
<dbReference type="GO" id="GO:0005829">
    <property type="term" value="C:cytosol"/>
    <property type="evidence" value="ECO:0000314"/>
    <property type="project" value="TAIR"/>
</dbReference>
<dbReference type="GO" id="GO:0047622">
    <property type="term" value="F:adenosine nucleosidase activity"/>
    <property type="evidence" value="ECO:0000314"/>
    <property type="project" value="TAIR"/>
</dbReference>
<dbReference type="GO" id="GO:0042802">
    <property type="term" value="F:identical protein binding"/>
    <property type="evidence" value="ECO:0000314"/>
    <property type="project" value="UniProtKB"/>
</dbReference>
<dbReference type="GO" id="GO:0047724">
    <property type="term" value="F:inosine nucleosidase activity"/>
    <property type="evidence" value="ECO:0000314"/>
    <property type="project" value="TAIR"/>
</dbReference>
<dbReference type="GO" id="GO:0046982">
    <property type="term" value="F:protein heterodimerization activity"/>
    <property type="evidence" value="ECO:0000314"/>
    <property type="project" value="UniProtKB"/>
</dbReference>
<dbReference type="GO" id="GO:0042803">
    <property type="term" value="F:protein homodimerization activity"/>
    <property type="evidence" value="ECO:0000314"/>
    <property type="project" value="UniProtKB"/>
</dbReference>
<dbReference type="GO" id="GO:0045437">
    <property type="term" value="F:uridine nucleosidase activity"/>
    <property type="evidence" value="ECO:0000314"/>
    <property type="project" value="TAIR"/>
</dbReference>
<dbReference type="GO" id="GO:0072585">
    <property type="term" value="F:xanthosine nucleotidase activity"/>
    <property type="evidence" value="ECO:0000314"/>
    <property type="project" value="TAIR"/>
</dbReference>
<dbReference type="GO" id="GO:0006152">
    <property type="term" value="P:purine nucleoside catabolic process"/>
    <property type="evidence" value="ECO:0000315"/>
    <property type="project" value="TAIR"/>
</dbReference>
<dbReference type="GO" id="GO:0006218">
    <property type="term" value="P:uridine catabolic process"/>
    <property type="evidence" value="ECO:0000315"/>
    <property type="project" value="TAIR"/>
</dbReference>
<dbReference type="CDD" id="cd02650">
    <property type="entry name" value="nuc_hydro_CaPnhB"/>
    <property type="match status" value="1"/>
</dbReference>
<dbReference type="FunFam" id="3.90.245.10:FF:000004">
    <property type="entry name" value="Probable uridine nucleosidase 1"/>
    <property type="match status" value="1"/>
</dbReference>
<dbReference type="Gene3D" id="3.90.245.10">
    <property type="entry name" value="Ribonucleoside hydrolase-like"/>
    <property type="match status" value="1"/>
</dbReference>
<dbReference type="InterPro" id="IPR001910">
    <property type="entry name" value="Inosine/uridine_hydrolase_dom"/>
</dbReference>
<dbReference type="InterPro" id="IPR023186">
    <property type="entry name" value="IUNH"/>
</dbReference>
<dbReference type="InterPro" id="IPR036452">
    <property type="entry name" value="Ribo_hydro-like"/>
</dbReference>
<dbReference type="PANTHER" id="PTHR12304">
    <property type="entry name" value="INOSINE-URIDINE PREFERRING NUCLEOSIDE HYDROLASE"/>
    <property type="match status" value="1"/>
</dbReference>
<dbReference type="PANTHER" id="PTHR12304:SF1">
    <property type="entry name" value="URIDINE NUCLEOSIDASE 1"/>
    <property type="match status" value="1"/>
</dbReference>
<dbReference type="Pfam" id="PF01156">
    <property type="entry name" value="IU_nuc_hydro"/>
    <property type="match status" value="1"/>
</dbReference>
<dbReference type="SUPFAM" id="SSF53590">
    <property type="entry name" value="Nucleoside hydrolase"/>
    <property type="match status" value="1"/>
</dbReference>
<reference key="1">
    <citation type="journal article" date="1999" name="Nature">
        <title>Sequence and analysis of chromosome 2 of the plant Arabidopsis thaliana.</title>
        <authorList>
            <person name="Lin X."/>
            <person name="Kaul S."/>
            <person name="Rounsley S.D."/>
            <person name="Shea T.P."/>
            <person name="Benito M.-I."/>
            <person name="Town C.D."/>
            <person name="Fujii C.Y."/>
            <person name="Mason T.M."/>
            <person name="Bowman C.L."/>
            <person name="Barnstead M.E."/>
            <person name="Feldblyum T.V."/>
            <person name="Buell C.R."/>
            <person name="Ketchum K.A."/>
            <person name="Lee J.J."/>
            <person name="Ronning C.M."/>
            <person name="Koo H.L."/>
            <person name="Moffat K.S."/>
            <person name="Cronin L.A."/>
            <person name="Shen M."/>
            <person name="Pai G."/>
            <person name="Van Aken S."/>
            <person name="Umayam L."/>
            <person name="Tallon L.J."/>
            <person name="Gill J.E."/>
            <person name="Adams M.D."/>
            <person name="Carrera A.J."/>
            <person name="Creasy T.H."/>
            <person name="Goodman H.M."/>
            <person name="Somerville C.R."/>
            <person name="Copenhaver G.P."/>
            <person name="Preuss D."/>
            <person name="Nierman W.C."/>
            <person name="White O."/>
            <person name="Eisen J.A."/>
            <person name="Salzberg S.L."/>
            <person name="Fraser C.M."/>
            <person name="Venter J.C."/>
        </authorList>
    </citation>
    <scope>NUCLEOTIDE SEQUENCE [LARGE SCALE GENOMIC DNA]</scope>
    <source>
        <strain>cv. Columbia</strain>
    </source>
</reference>
<reference key="2">
    <citation type="journal article" date="2017" name="Plant J.">
        <title>Araport11: a complete reannotation of the Arabidopsis thaliana reference genome.</title>
        <authorList>
            <person name="Cheng C.Y."/>
            <person name="Krishnakumar V."/>
            <person name="Chan A.P."/>
            <person name="Thibaud-Nissen F."/>
            <person name="Schobel S."/>
            <person name="Town C.D."/>
        </authorList>
    </citation>
    <scope>GENOME REANNOTATION</scope>
    <source>
        <strain>cv. Columbia</strain>
    </source>
</reference>
<reference key="3">
    <citation type="journal article" date="2003" name="Science">
        <title>Empirical analysis of transcriptional activity in the Arabidopsis genome.</title>
        <authorList>
            <person name="Yamada K."/>
            <person name="Lim J."/>
            <person name="Dale J.M."/>
            <person name="Chen H."/>
            <person name="Shinn P."/>
            <person name="Palm C.J."/>
            <person name="Southwick A.M."/>
            <person name="Wu H.C."/>
            <person name="Kim C.J."/>
            <person name="Nguyen M."/>
            <person name="Pham P.K."/>
            <person name="Cheuk R.F."/>
            <person name="Karlin-Newmann G."/>
            <person name="Liu S.X."/>
            <person name="Lam B."/>
            <person name="Sakano H."/>
            <person name="Wu T."/>
            <person name="Yu G."/>
            <person name="Miranda M."/>
            <person name="Quach H.L."/>
            <person name="Tripp M."/>
            <person name="Chang C.H."/>
            <person name="Lee J.M."/>
            <person name="Toriumi M.J."/>
            <person name="Chan M.M."/>
            <person name="Tang C.C."/>
            <person name="Onodera C.S."/>
            <person name="Deng J.M."/>
            <person name="Akiyama K."/>
            <person name="Ansari Y."/>
            <person name="Arakawa T."/>
            <person name="Banh J."/>
            <person name="Banno F."/>
            <person name="Bowser L."/>
            <person name="Brooks S.Y."/>
            <person name="Carninci P."/>
            <person name="Chao Q."/>
            <person name="Choy N."/>
            <person name="Enju A."/>
            <person name="Goldsmith A.D."/>
            <person name="Gurjal M."/>
            <person name="Hansen N.F."/>
            <person name="Hayashizaki Y."/>
            <person name="Johnson-Hopson C."/>
            <person name="Hsuan V.W."/>
            <person name="Iida K."/>
            <person name="Karnes M."/>
            <person name="Khan S."/>
            <person name="Koesema E."/>
            <person name="Ishida J."/>
            <person name="Jiang P.X."/>
            <person name="Jones T."/>
            <person name="Kawai J."/>
            <person name="Kamiya A."/>
            <person name="Meyers C."/>
            <person name="Nakajima M."/>
            <person name="Narusaka M."/>
            <person name="Seki M."/>
            <person name="Sakurai T."/>
            <person name="Satou M."/>
            <person name="Tamse R."/>
            <person name="Vaysberg M."/>
            <person name="Wallender E.K."/>
            <person name="Wong C."/>
            <person name="Yamamura Y."/>
            <person name="Yuan S."/>
            <person name="Shinozaki K."/>
            <person name="Davis R.W."/>
            <person name="Theologis A."/>
            <person name="Ecker J.R."/>
        </authorList>
    </citation>
    <scope>NUCLEOTIDE SEQUENCE [LARGE SCALE MRNA]</scope>
    <source>
        <strain>cv. Columbia</strain>
    </source>
</reference>
<reference key="4">
    <citation type="submission" date="2002-03" db="EMBL/GenBank/DDBJ databases">
        <title>Full-length cDNA from Arabidopsis thaliana.</title>
        <authorList>
            <person name="Brover V.V."/>
            <person name="Troukhan M.E."/>
            <person name="Alexandrov N.A."/>
            <person name="Lu Y.-P."/>
            <person name="Flavell R.B."/>
            <person name="Feldmann K.A."/>
        </authorList>
    </citation>
    <scope>NUCLEOTIDE SEQUENCE [LARGE SCALE MRNA]</scope>
</reference>
<reference key="5">
    <citation type="journal article" date="2009" name="Plant Cell">
        <title>Uridine-ribohydrolase is a key regulator in the uridine degradation pathway of Arabidopsis.</title>
        <authorList>
            <person name="Jung B."/>
            <person name="Florchinger M."/>
            <person name="Kunz H.H."/>
            <person name="Traub M."/>
            <person name="Wartenberg R."/>
            <person name="Jeblick W."/>
            <person name="Neuhaus H.E."/>
            <person name="Mohlmann T."/>
        </authorList>
    </citation>
    <scope>FUNCTION</scope>
    <scope>CATALYTIC ACTIVITY</scope>
    <scope>TISSUE SPECIFICITY</scope>
    <scope>SUBCELLULAR LOCATION</scope>
    <scope>BIOPHYSICOCHEMICAL PROPERTIES</scope>
</reference>
<reference key="6">
    <citation type="journal article" date="2011" name="New Phytol.">
        <title>Arabidopsis thaliana nucleosidase mutants provide new insights into nucleoside degradation.</title>
        <authorList>
            <person name="Riegler H."/>
            <person name="Geserick C."/>
            <person name="Zrenner R."/>
        </authorList>
    </citation>
    <scope>FUNCTION</scope>
    <scope>DISRUPTION PHENOTYPE</scope>
    <source>
        <strain>cv. Columbia</strain>
    </source>
</reference>
<reference key="7">
    <citation type="journal article" date="2011" name="Plant J.">
        <title>Arabidopsis nucleoside hydrolases involved in intracellular and extracellular degradation of purines.</title>
        <authorList>
            <person name="Jung B."/>
            <person name="Hoffmann C."/>
            <person name="Moehlmann T."/>
        </authorList>
    </citation>
    <scope>FUNCTION</scope>
    <scope>DISRUPTION PHENOTYPE</scope>
    <scope>CATALYTIC ACTIVITY</scope>
    <scope>BIOPHYSICOCHEMICAL PROPERTIES</scope>
    <scope>GENE FAMILY</scope>
    <scope>NOMENCLATURE</scope>
    <source>
        <strain>cv. Columbia</strain>
    </source>
</reference>
<reference key="8">
    <citation type="journal article" date="2019" name="Plant Cell">
        <title>AMP and GMP catabolism in Arabidopsis converge on xanthosine, which is degraded by a nucleoside hydrolase heterocomplex.</title>
        <authorList>
            <person name="Baccolini C."/>
            <person name="Witte C.-P."/>
        </authorList>
    </citation>
    <scope>FUNCTION</scope>
    <scope>DISRUPTION PHENOTYPE</scope>
    <scope>BIOPHYSICOCHEMICAL PROPERTIES</scope>
    <scope>TISSUE SPECIFICITY</scope>
    <scope>SUBUNIT</scope>
    <scope>INTERACTION WITH URH2</scope>
    <scope>MUTAGENESIS OF ASP-29</scope>
    <scope>ACTIVE SITE</scope>
    <source>
        <strain>cv. Columbia</strain>
    </source>
</reference>
<protein>
    <recommendedName>
        <fullName evidence="6">Uridine nucleosidase 1</fullName>
        <ecNumber evidence="2">3.2.2.3</ecNumber>
    </recommendedName>
    <alternativeName>
        <fullName evidence="6">Adenosine nucleosidase</fullName>
        <ecNumber evidence="2">3.2.2.7</ecNumber>
    </alternativeName>
    <alternativeName>
        <fullName evidence="6">Inosine nucleosidase</fullName>
        <ecNumber evidence="2">3.2.2.2</ecNumber>
    </alternativeName>
    <alternativeName>
        <fullName evidence="7">Nucleoside hydrolase 1</fullName>
    </alternativeName>
    <alternativeName>
        <fullName evidence="6">Uridine ribohydrolase 1</fullName>
    </alternativeName>
    <alternativeName>
        <fullName evidence="7">Xanthosine nucleosidase</fullName>
        <ecNumber evidence="3 5">3.2.2.-</ecNumber>
    </alternativeName>
</protein>
<keyword id="KW-0963">Cytoplasm</keyword>
<keyword id="KW-0326">Glycosidase</keyword>
<keyword id="KW-0378">Hydrolase</keyword>
<keyword id="KW-1185">Reference proteome</keyword>
<gene>
    <name evidence="6" type="primary">URH1</name>
    <name evidence="7" type="synonym">NSH1</name>
    <name evidence="9" type="ordered locus">At2g36310</name>
    <name evidence="10" type="ORF">F2H17.8</name>
</gene>
<organism>
    <name type="scientific">Arabidopsis thaliana</name>
    <name type="common">Mouse-ear cress</name>
    <dbReference type="NCBI Taxonomy" id="3702"/>
    <lineage>
        <taxon>Eukaryota</taxon>
        <taxon>Viridiplantae</taxon>
        <taxon>Streptophyta</taxon>
        <taxon>Embryophyta</taxon>
        <taxon>Tracheophyta</taxon>
        <taxon>Spermatophyta</taxon>
        <taxon>Magnoliopsida</taxon>
        <taxon>eudicotyledons</taxon>
        <taxon>Gunneridae</taxon>
        <taxon>Pentapetalae</taxon>
        <taxon>rosids</taxon>
        <taxon>malvids</taxon>
        <taxon>Brassicales</taxon>
        <taxon>Brassicaceae</taxon>
        <taxon>Camelineae</taxon>
        <taxon>Arabidopsis</taxon>
    </lineage>
</organism>
<comment type="function">
    <text evidence="2 3 4 5">Involved in purine and pyrimidine breakdown rather than in pyrimidine salvage, especially in response to dark stress (PubMed:19293370, PubMed:21235647, PubMed:21599668, PubMed:30787180). Together with URH2, required for efficient inosine and xanthosine hydrolytic activities (PubMed:21599668, PubMed:30787180). Unable to use cytidine as a substrate (PubMed:19293370). Can use uridine, inosine, adenosine as well as the cytokinin derivative isopentenyladenine-riboside as substrates (PubMed:19293370). Also hydrolyzes xanthosine with high efficiency (PubMed:21235647).</text>
</comment>
<comment type="catalytic activity">
    <reaction evidence="2">
        <text>uridine + H2O = D-ribose + uracil</text>
        <dbReference type="Rhea" id="RHEA:15577"/>
        <dbReference type="ChEBI" id="CHEBI:15377"/>
        <dbReference type="ChEBI" id="CHEBI:16704"/>
        <dbReference type="ChEBI" id="CHEBI:17568"/>
        <dbReference type="ChEBI" id="CHEBI:47013"/>
        <dbReference type="EC" id="3.2.2.3"/>
    </reaction>
</comment>
<comment type="catalytic activity">
    <reaction evidence="3 5">
        <text>xanthosine + H2O = D-ribose + xanthine</text>
        <dbReference type="Rhea" id="RHEA:27994"/>
        <dbReference type="ChEBI" id="CHEBI:15377"/>
        <dbReference type="ChEBI" id="CHEBI:17712"/>
        <dbReference type="ChEBI" id="CHEBI:18107"/>
        <dbReference type="ChEBI" id="CHEBI:47013"/>
    </reaction>
</comment>
<comment type="catalytic activity">
    <reaction evidence="2">
        <text>inosine + H2O = hypoxanthine + D-ribose</text>
        <dbReference type="Rhea" id="RHEA:16657"/>
        <dbReference type="ChEBI" id="CHEBI:15377"/>
        <dbReference type="ChEBI" id="CHEBI:17368"/>
        <dbReference type="ChEBI" id="CHEBI:17596"/>
        <dbReference type="ChEBI" id="CHEBI:47013"/>
        <dbReference type="EC" id="3.2.2.2"/>
    </reaction>
</comment>
<comment type="catalytic activity">
    <reaction evidence="2">
        <text>adenosine + H2O = D-ribose + adenine</text>
        <dbReference type="Rhea" id="RHEA:18669"/>
        <dbReference type="ChEBI" id="CHEBI:15377"/>
        <dbReference type="ChEBI" id="CHEBI:16335"/>
        <dbReference type="ChEBI" id="CHEBI:16708"/>
        <dbReference type="ChEBI" id="CHEBI:47013"/>
        <dbReference type="EC" id="3.2.2.7"/>
    </reaction>
</comment>
<comment type="biophysicochemical properties">
    <kinetics>
        <KM evidence="2">0.8 mM for uridine</KM>
        <KM evidence="2">1.4 mM for inosine</KM>
        <KM evidence="2">0.7 mM for adenosine</KM>
        <KM evidence="2">0.4 mM for isopentenyladenine-riboside</KM>
        <KM evidence="3">1.69 mM for xanthosine</KM>
        <KM evidence="3">0.44 mM for methyluridine</KM>
        <KM evidence="5">0.52 mM for xanthosine</KM>
        <KM evidence="5">0.73 mM for uridine</KM>
        <KM evidence="5">0.06 mM for xanthosine (when in complex with URH2)</KM>
        <KM evidence="5">4.3 mM for uridine (when in complex with URH2)</KM>
        <KM evidence="5">0.6 mM for inosine (when in complex with URH2)</KM>
        <Vmax evidence="2">18.281 mmol/h/mg enzyme with uridine as substrate</Vmax>
        <Vmax evidence="2">0.869 mmol/h/mg enzyme with inosine as substrate</Vmax>
        <Vmax evidence="2">0.028 mmol/h/mg enzyme with adenosine as substrate</Vmax>
        <Vmax evidence="2">0.005 mmol/h/mg enzyme with isopentenyladenine-riboside as substrate</Vmax>
        <text evidence="5">kcat is 2.65 sec(-1) with xanthosine as substrate (PubMed:30787180). kcat is 33.5 sec(-1) with uridine as substrate (PubMed:30787180). kcat is 23.3 sec(-1) with xanthosine as substrate (when in complex with URH2) (PubMed:30787180). kcat is 55.3 sec(-1) with uridine as substrate (when in complex with URH2) (PubMed:30787180). kcat is 42.3 sec(-1) with inosine as substrate (when in complex with URH2) (PubMed:30787180).</text>
    </kinetics>
</comment>
<comment type="subunit">
    <text evidence="5">Homodimer (PubMed:30787180). Component of the NSH heterocomplex made of URH1/NSH1 and URH2/NSH2 which exhibits strong xanthosine nucleosidase activity (PubMed:30787180). Interacts with URH2 (PubMed:30787180).</text>
</comment>
<comment type="subcellular location">
    <subcellularLocation>
        <location evidence="2">Cytoplasm</location>
    </subcellularLocation>
</comment>
<comment type="tissue specificity">
    <text evidence="2 5">Expressed ubiquitously in leaves, flowers, stems, pollen cells, root tip meristem and root vasculature.</text>
</comment>
<comment type="disruption phenotype">
    <text evidence="3 4 5">Normal seedling germination and plant growth and development in standard conditions, despite an abnormal accumulation in the roots of uridine and of other pyrimidine metabolites as well as of xanthosine, but no accumulation of inosine (PubMed:21599668). Accelerated senescence accompanied by marked accumulation of uridine and xanthosine under conditions of prolonged darkness leading to pale green/yellow plants due to increased chlorophyll degradation (PubMed:21235647). The roots of the double mutant urh1 urh2 accumulates strong levels of xanthosine (PubMed:21599668, PubMed:30787180).</text>
</comment>
<comment type="similarity">
    <text evidence="8">Belongs to the IUNH family.</text>
</comment>
<sequence length="336" mass="36086">MDCGMENCNGGISNGDVLGKHEKLIIDTDPGIDDSMAILMAFQTPELEILGLTTVFGNVSTQDATRNALLLCEIAGFPDVPVAEGSSEPLKGGIPRVADFVHGKNGLGDVSLPPPSRKKSEKSAAEFLDEKVEEYPGEVTILALGPLTNLALAIKRDSSFASKVKKIVILGGAFFSLGNVNPAAEANIYGDPEAADVVFTSGADITVVGINITTQLKLSDDDLLELGNCKGKHSKLISDMCKFYRDWHVKSDGVYGVYLHDPVSFVAVVRPDLFTYKKGVVRVETQGICVGHTLMDQGLKRWNGSNPWVGYSPISVAWTVDVEGVLEYVKAKLMKP</sequence>
<accession>Q9SJM7</accession>
<accession>Q940Q6</accession>
<proteinExistence type="evidence at protein level"/>
<evidence type="ECO:0000250" key="1"/>
<evidence type="ECO:0000269" key="2">
    <source>
    </source>
</evidence>
<evidence type="ECO:0000269" key="3">
    <source>
    </source>
</evidence>
<evidence type="ECO:0000269" key="4">
    <source>
    </source>
</evidence>
<evidence type="ECO:0000269" key="5">
    <source>
    </source>
</evidence>
<evidence type="ECO:0000303" key="6">
    <source>
    </source>
</evidence>
<evidence type="ECO:0000303" key="7">
    <source>
    </source>
</evidence>
<evidence type="ECO:0000305" key="8"/>
<evidence type="ECO:0000312" key="9">
    <source>
        <dbReference type="Araport" id="AT2G36310"/>
    </source>
</evidence>
<evidence type="ECO:0000312" key="10">
    <source>
        <dbReference type="EMBL" id="AAD21435.2"/>
    </source>
</evidence>
<feature type="chain" id="PRO_0000394502" description="Uridine nucleosidase 1">
    <location>
        <begin position="1"/>
        <end position="336"/>
    </location>
</feature>
<feature type="active site" evidence="5">
    <location>
        <position position="29"/>
    </location>
</feature>
<feature type="active site" evidence="1">
    <location>
        <position position="260"/>
    </location>
</feature>
<feature type="mutagenesis site" description="Abrogated hydrolase activity." evidence="5">
    <original>D</original>
    <variation>A</variation>
    <location>
        <position position="29"/>
    </location>
</feature>
<name>URH1_ARATH</name>